<comment type="function">
    <text evidence="2 3 4">Transcriptional activator that mediates FGF signaling during neural development (By similarity). Plays a role in the regulation of cell movement (By similarity). Does not bind DNA by itself (By similarity).</text>
</comment>
<comment type="similarity">
    <text evidence="5">Belongs to the Churchill family.</text>
</comment>
<comment type="sequence caution" evidence="5">
    <conflict type="erroneous initiation">
        <sequence resource="EMBL-CDS" id="CAH92555"/>
    </conflict>
    <text>Extended N-terminus.</text>
</comment>
<accession>Q5R6Q5</accession>
<proteinExistence type="inferred from homology"/>
<protein>
    <recommendedName>
        <fullName>Protein Churchill</fullName>
    </recommendedName>
</protein>
<sequence length="112" mass="12887">MCGDCVEKEYPNRGNTCLENGSFLLNFTGCAVCSKRDFMLITNKSLKEEDGEEIVTYDHLCKNCHHVIARHEYTFSIMDEFQEYTMLCLLCGKAEDTISILPDDPRQMTLLF</sequence>
<name>CHUR_PONAB</name>
<organism>
    <name type="scientific">Pongo abelii</name>
    <name type="common">Sumatran orangutan</name>
    <name type="synonym">Pongo pygmaeus abelii</name>
    <dbReference type="NCBI Taxonomy" id="9601"/>
    <lineage>
        <taxon>Eukaryota</taxon>
        <taxon>Metazoa</taxon>
        <taxon>Chordata</taxon>
        <taxon>Craniata</taxon>
        <taxon>Vertebrata</taxon>
        <taxon>Euteleostomi</taxon>
        <taxon>Mammalia</taxon>
        <taxon>Eutheria</taxon>
        <taxon>Euarchontoglires</taxon>
        <taxon>Primates</taxon>
        <taxon>Haplorrhini</taxon>
        <taxon>Catarrhini</taxon>
        <taxon>Hominidae</taxon>
        <taxon>Pongo</taxon>
    </lineage>
</organism>
<keyword id="KW-0010">Activator</keyword>
<keyword id="KW-0217">Developmental protein</keyword>
<keyword id="KW-0479">Metal-binding</keyword>
<keyword id="KW-1185">Reference proteome</keyword>
<keyword id="KW-0804">Transcription</keyword>
<keyword id="KW-0805">Transcription regulation</keyword>
<keyword id="KW-0862">Zinc</keyword>
<gene>
    <name type="primary">CHURC1</name>
</gene>
<reference key="1">
    <citation type="submission" date="2004-11" db="EMBL/GenBank/DDBJ databases">
        <authorList>
            <consortium name="The German cDNA consortium"/>
        </authorList>
    </citation>
    <scope>NUCLEOTIDE SEQUENCE [LARGE SCALE MRNA]</scope>
    <source>
        <tissue>Brain cortex</tissue>
    </source>
</reference>
<feature type="chain" id="PRO_0000089667" description="Protein Churchill">
    <location>
        <begin position="1"/>
        <end position="112"/>
    </location>
</feature>
<feature type="binding site" evidence="1">
    <location>
        <position position="2"/>
    </location>
    <ligand>
        <name>Zn(2+)</name>
        <dbReference type="ChEBI" id="CHEBI:29105"/>
        <label>1</label>
    </ligand>
</feature>
<feature type="binding site" evidence="1">
    <location>
        <position position="5"/>
    </location>
    <ligand>
        <name>Zn(2+)</name>
        <dbReference type="ChEBI" id="CHEBI:29105"/>
        <label>1</label>
    </ligand>
</feature>
<feature type="binding site" evidence="1">
    <location>
        <position position="30"/>
    </location>
    <ligand>
        <name>Zn(2+)</name>
        <dbReference type="ChEBI" id="CHEBI:29105"/>
        <label>1</label>
    </ligand>
</feature>
<feature type="binding site" evidence="1">
    <location>
        <position position="30"/>
    </location>
    <ligand>
        <name>Zn(2+)</name>
        <dbReference type="ChEBI" id="CHEBI:29105"/>
        <label>2</label>
    </ligand>
</feature>
<feature type="binding site" evidence="1">
    <location>
        <position position="33"/>
    </location>
    <ligand>
        <name>Zn(2+)</name>
        <dbReference type="ChEBI" id="CHEBI:29105"/>
        <label>2</label>
    </ligand>
</feature>
<feature type="binding site" evidence="1">
    <location>
        <position position="59"/>
    </location>
    <ligand>
        <name>Zn(2+)</name>
        <dbReference type="ChEBI" id="CHEBI:29105"/>
        <label>3</label>
    </ligand>
</feature>
<feature type="binding site" evidence="1">
    <location>
        <position position="61"/>
    </location>
    <ligand>
        <name>Zn(2+)</name>
        <dbReference type="ChEBI" id="CHEBI:29105"/>
        <label>2</label>
    </ligand>
</feature>
<feature type="binding site" evidence="1">
    <location>
        <position position="64"/>
    </location>
    <ligand>
        <name>Zn(2+)</name>
        <dbReference type="ChEBI" id="CHEBI:29105"/>
        <label>2</label>
    </ligand>
</feature>
<feature type="binding site" evidence="1">
    <location>
        <position position="66"/>
    </location>
    <ligand>
        <name>Zn(2+)</name>
        <dbReference type="ChEBI" id="CHEBI:29105"/>
        <label>1</label>
    </ligand>
</feature>
<feature type="binding site" evidence="1">
    <location>
        <position position="71"/>
    </location>
    <ligand>
        <name>Zn(2+)</name>
        <dbReference type="ChEBI" id="CHEBI:29105"/>
        <label>3</label>
    </ligand>
</feature>
<feature type="binding site" evidence="1">
    <location>
        <position position="88"/>
    </location>
    <ligand>
        <name>Zn(2+)</name>
        <dbReference type="ChEBI" id="CHEBI:29105"/>
        <label>3</label>
    </ligand>
</feature>
<feature type="binding site" evidence="1">
    <location>
        <position position="91"/>
    </location>
    <ligand>
        <name>Zn(2+)</name>
        <dbReference type="ChEBI" id="CHEBI:29105"/>
        <label>3</label>
    </ligand>
</feature>
<dbReference type="EMBL" id="CR860430">
    <property type="protein sequence ID" value="CAH92555.1"/>
    <property type="status" value="ALT_INIT"/>
    <property type="molecule type" value="mRNA"/>
</dbReference>
<dbReference type="RefSeq" id="NP_001126496.1">
    <property type="nucleotide sequence ID" value="NM_001133024.1"/>
</dbReference>
<dbReference type="BMRB" id="Q5R6Q5"/>
<dbReference type="SMR" id="Q5R6Q5"/>
<dbReference type="FunCoup" id="Q5R6Q5">
    <property type="interactions" value="280"/>
</dbReference>
<dbReference type="STRING" id="9601.ENSPPYP00000006713"/>
<dbReference type="Ensembl" id="ENSPPYT00000039376.1">
    <property type="protein sequence ID" value="ENSPPYP00000042374.1"/>
    <property type="gene ID" value="ENSPPYG00000005906.3"/>
</dbReference>
<dbReference type="GeneID" id="100173484"/>
<dbReference type="KEGG" id="pon:100173484"/>
<dbReference type="CTD" id="91612"/>
<dbReference type="eggNOG" id="ENOG502S4AE">
    <property type="taxonomic scope" value="Eukaryota"/>
</dbReference>
<dbReference type="GeneTree" id="ENSGT00390000011163"/>
<dbReference type="HOGENOM" id="CLU_142022_0_0_1"/>
<dbReference type="InParanoid" id="Q5R6Q5"/>
<dbReference type="OMA" id="ASHEYTF"/>
<dbReference type="OrthoDB" id="5954706at2759"/>
<dbReference type="TreeFam" id="TF333004"/>
<dbReference type="Proteomes" id="UP000001595">
    <property type="component" value="Chromosome 14"/>
</dbReference>
<dbReference type="GO" id="GO:0008270">
    <property type="term" value="F:zinc ion binding"/>
    <property type="evidence" value="ECO:0007669"/>
    <property type="project" value="InterPro"/>
</dbReference>
<dbReference type="GO" id="GO:0008543">
    <property type="term" value="P:fibroblast growth factor receptor signaling pathway"/>
    <property type="evidence" value="ECO:0007669"/>
    <property type="project" value="TreeGrafter"/>
</dbReference>
<dbReference type="GO" id="GO:0045893">
    <property type="term" value="P:positive regulation of DNA-templated transcription"/>
    <property type="evidence" value="ECO:0007669"/>
    <property type="project" value="InterPro"/>
</dbReference>
<dbReference type="FunFam" id="2.60.40.4240:FF:000001">
    <property type="entry name" value="Churchill domain containing 1"/>
    <property type="match status" value="1"/>
</dbReference>
<dbReference type="Gene3D" id="2.60.40.4240">
    <property type="entry name" value="Transcription activator, Churchill"/>
    <property type="match status" value="1"/>
</dbReference>
<dbReference type="InterPro" id="IPR038543">
    <property type="entry name" value="Churchill_sf"/>
</dbReference>
<dbReference type="InterPro" id="IPR009508">
    <property type="entry name" value="Transcrpt_activator_Churchill"/>
</dbReference>
<dbReference type="PANTHER" id="PTHR31931">
    <property type="entry name" value="PROTEIN CHURCHILL"/>
    <property type="match status" value="1"/>
</dbReference>
<dbReference type="PANTHER" id="PTHR31931:SF2">
    <property type="entry name" value="PROTEIN CHURCHILL"/>
    <property type="match status" value="1"/>
</dbReference>
<dbReference type="Pfam" id="PF06573">
    <property type="entry name" value="Churchill"/>
    <property type="match status" value="1"/>
</dbReference>
<evidence type="ECO:0000250" key="1"/>
<evidence type="ECO:0000250" key="2">
    <source>
        <dbReference type="UniProtKB" id="Q5U3N7"/>
    </source>
</evidence>
<evidence type="ECO:0000250" key="3">
    <source>
        <dbReference type="UniProtKB" id="Q8WUH1"/>
    </source>
</evidence>
<evidence type="ECO:0000250" key="4">
    <source>
        <dbReference type="UniProtKB" id="Q9DFZ3"/>
    </source>
</evidence>
<evidence type="ECO:0000305" key="5"/>